<accession>P66931</accession>
<accession>A0A1R3Y221</accession>
<accession>O33296</accession>
<accession>X2BLF4</accession>
<proteinExistence type="inferred from homology"/>
<keyword id="KW-0274">FAD</keyword>
<keyword id="KW-0285">Flavoprotein</keyword>
<keyword id="KW-0489">Methyltransferase</keyword>
<keyword id="KW-0521">NADP</keyword>
<keyword id="KW-0545">Nucleotide biosynthesis</keyword>
<keyword id="KW-1185">Reference proteome</keyword>
<keyword id="KW-0808">Transferase</keyword>
<dbReference type="EC" id="2.1.1.148" evidence="1"/>
<dbReference type="EMBL" id="LT708304">
    <property type="protein sequence ID" value="SIU01393.1"/>
    <property type="molecule type" value="Genomic_DNA"/>
</dbReference>
<dbReference type="RefSeq" id="NP_856421.1">
    <property type="nucleotide sequence ID" value="NC_002945.3"/>
</dbReference>
<dbReference type="RefSeq" id="WP_003899465.1">
    <property type="nucleotide sequence ID" value="NC_002945.4"/>
</dbReference>
<dbReference type="SMR" id="P66931"/>
<dbReference type="KEGG" id="mbo:BQ2027_MB2775C"/>
<dbReference type="PATRIC" id="fig|233413.5.peg.3041"/>
<dbReference type="UniPathway" id="UPA00575"/>
<dbReference type="Proteomes" id="UP000001419">
    <property type="component" value="Chromosome"/>
</dbReference>
<dbReference type="GO" id="GO:0050660">
    <property type="term" value="F:flavin adenine dinucleotide binding"/>
    <property type="evidence" value="ECO:0007669"/>
    <property type="project" value="InterPro"/>
</dbReference>
<dbReference type="GO" id="GO:0070402">
    <property type="term" value="F:NADPH binding"/>
    <property type="evidence" value="ECO:0007669"/>
    <property type="project" value="TreeGrafter"/>
</dbReference>
<dbReference type="GO" id="GO:0050797">
    <property type="term" value="F:thymidylate synthase (FAD) activity"/>
    <property type="evidence" value="ECO:0007669"/>
    <property type="project" value="UniProtKB-UniRule"/>
</dbReference>
<dbReference type="GO" id="GO:0004799">
    <property type="term" value="F:thymidylate synthase activity"/>
    <property type="evidence" value="ECO:0007669"/>
    <property type="project" value="TreeGrafter"/>
</dbReference>
<dbReference type="GO" id="GO:0006231">
    <property type="term" value="P:dTMP biosynthetic process"/>
    <property type="evidence" value="ECO:0007669"/>
    <property type="project" value="UniProtKB-UniRule"/>
</dbReference>
<dbReference type="GO" id="GO:0006235">
    <property type="term" value="P:dTTP biosynthetic process"/>
    <property type="evidence" value="ECO:0007669"/>
    <property type="project" value="UniProtKB-UniRule"/>
</dbReference>
<dbReference type="GO" id="GO:0032259">
    <property type="term" value="P:methylation"/>
    <property type="evidence" value="ECO:0007669"/>
    <property type="project" value="UniProtKB-KW"/>
</dbReference>
<dbReference type="CDD" id="cd20175">
    <property type="entry name" value="ThyX"/>
    <property type="match status" value="1"/>
</dbReference>
<dbReference type="Gene3D" id="3.30.1360.170">
    <property type="match status" value="1"/>
</dbReference>
<dbReference type="HAMAP" id="MF_01408">
    <property type="entry name" value="ThyX"/>
    <property type="match status" value="1"/>
</dbReference>
<dbReference type="InterPro" id="IPR003669">
    <property type="entry name" value="Thymidylate_synthase_ThyX"/>
</dbReference>
<dbReference type="InterPro" id="IPR036098">
    <property type="entry name" value="Thymidylate_synthase_ThyX_sf"/>
</dbReference>
<dbReference type="NCBIfam" id="TIGR02170">
    <property type="entry name" value="thyX"/>
    <property type="match status" value="1"/>
</dbReference>
<dbReference type="PANTHER" id="PTHR34934">
    <property type="entry name" value="FLAVIN-DEPENDENT THYMIDYLATE SYNTHASE"/>
    <property type="match status" value="1"/>
</dbReference>
<dbReference type="PANTHER" id="PTHR34934:SF1">
    <property type="entry name" value="FLAVIN-DEPENDENT THYMIDYLATE SYNTHASE"/>
    <property type="match status" value="1"/>
</dbReference>
<dbReference type="Pfam" id="PF02511">
    <property type="entry name" value="Thy1"/>
    <property type="match status" value="1"/>
</dbReference>
<dbReference type="SUPFAM" id="SSF69796">
    <property type="entry name" value="Thymidylate synthase-complementing protein Thy1"/>
    <property type="match status" value="1"/>
</dbReference>
<dbReference type="PROSITE" id="PS51331">
    <property type="entry name" value="THYX"/>
    <property type="match status" value="1"/>
</dbReference>
<protein>
    <recommendedName>
        <fullName evidence="1">Flavin-dependent thymidylate synthase</fullName>
        <shortName evidence="1">FDTS</shortName>
        <ecNumber evidence="1">2.1.1.148</ecNumber>
    </recommendedName>
    <alternativeName>
        <fullName evidence="1">FAD-dependent thymidylate synthase</fullName>
    </alternativeName>
    <alternativeName>
        <fullName evidence="1">Thymidylate synthase ThyX</fullName>
        <shortName evidence="1">TS</shortName>
        <shortName evidence="1">TSase</shortName>
    </alternativeName>
</protein>
<name>THYX_MYCBO</name>
<gene>
    <name evidence="1" type="primary">thyX</name>
    <name type="ordered locus">BQ2027_MB2775C</name>
</gene>
<organism>
    <name type="scientific">Mycobacterium bovis (strain ATCC BAA-935 / AF2122/97)</name>
    <dbReference type="NCBI Taxonomy" id="233413"/>
    <lineage>
        <taxon>Bacteria</taxon>
        <taxon>Bacillati</taxon>
        <taxon>Actinomycetota</taxon>
        <taxon>Actinomycetes</taxon>
        <taxon>Mycobacteriales</taxon>
        <taxon>Mycobacteriaceae</taxon>
        <taxon>Mycobacterium</taxon>
        <taxon>Mycobacterium tuberculosis complex</taxon>
    </lineage>
</organism>
<comment type="function">
    <text evidence="1">Catalyzes the reductive methylation of 2'-deoxyuridine-5'-monophosphate (dUMP) to 2'-deoxythymidine-5'-monophosphate (dTMP) while utilizing 5,10-methylenetetrahydrofolate (mTHF) as the methyl donor, and NADPH and FADH(2) as the reductant.</text>
</comment>
<comment type="catalytic activity">
    <reaction evidence="1">
        <text>dUMP + (6R)-5,10-methylene-5,6,7,8-tetrahydrofolate + NADPH + H(+) = dTMP + (6S)-5,6,7,8-tetrahydrofolate + NADP(+)</text>
        <dbReference type="Rhea" id="RHEA:29043"/>
        <dbReference type="ChEBI" id="CHEBI:15378"/>
        <dbReference type="ChEBI" id="CHEBI:15636"/>
        <dbReference type="ChEBI" id="CHEBI:57453"/>
        <dbReference type="ChEBI" id="CHEBI:57783"/>
        <dbReference type="ChEBI" id="CHEBI:58349"/>
        <dbReference type="ChEBI" id="CHEBI:63528"/>
        <dbReference type="ChEBI" id="CHEBI:246422"/>
        <dbReference type="EC" id="2.1.1.148"/>
    </reaction>
</comment>
<comment type="cofactor">
    <cofactor evidence="1">
        <name>FAD</name>
        <dbReference type="ChEBI" id="CHEBI:57692"/>
    </cofactor>
    <text evidence="1">Binds 4 FAD per tetramer. Each FAD binding site is formed by three monomers.</text>
</comment>
<comment type="pathway">
    <text evidence="1">Pyrimidine metabolism; dTTP biosynthesis.</text>
</comment>
<comment type="subunit">
    <text evidence="1">Homotetramer.</text>
</comment>
<comment type="similarity">
    <text evidence="1">Belongs to the thymidylate synthase ThyX family.</text>
</comment>
<sequence>MAETAPLRVQLIAKTDFLAPPDVPWTTDADGGPALVEFAGRACYQSWSKPNPKTATNAGYLRHIIDVGHFSVLEHASVSFYITGISRSCTHELIRHRHFSYSQLSQRYVPEKDSRVVVPPGMEDDADLRHILTEAADAARATYSELLAKLEAKFADQPNAILRRKQARQAARAVLPNATETRIVVTGNYRAWRHFIAMRASEHADVEIRRLAIECLRQLAAVAPAVFADFEVTTLADGTEVATSPLATEA</sequence>
<evidence type="ECO:0000255" key="1">
    <source>
        <dbReference type="HAMAP-Rule" id="MF_01408"/>
    </source>
</evidence>
<evidence type="ECO:0000255" key="2">
    <source>
        <dbReference type="PROSITE-ProRule" id="PRU00661"/>
    </source>
</evidence>
<reference key="1">
    <citation type="journal article" date="2003" name="Proc. Natl. Acad. Sci. U.S.A.">
        <title>The complete genome sequence of Mycobacterium bovis.</title>
        <authorList>
            <person name="Garnier T."/>
            <person name="Eiglmeier K."/>
            <person name="Camus J.-C."/>
            <person name="Medina N."/>
            <person name="Mansoor H."/>
            <person name="Pryor M."/>
            <person name="Duthoy S."/>
            <person name="Grondin S."/>
            <person name="Lacroix C."/>
            <person name="Monsempe C."/>
            <person name="Simon S."/>
            <person name="Harris B."/>
            <person name="Atkin R."/>
            <person name="Doggett J."/>
            <person name="Mayes R."/>
            <person name="Keating L."/>
            <person name="Wheeler P.R."/>
            <person name="Parkhill J."/>
            <person name="Barrell B.G."/>
            <person name="Cole S.T."/>
            <person name="Gordon S.V."/>
            <person name="Hewinson R.G."/>
        </authorList>
    </citation>
    <scope>NUCLEOTIDE SEQUENCE [LARGE SCALE GENOMIC DNA]</scope>
    <source>
        <strain>ATCC BAA-935 / AF2122/97</strain>
    </source>
</reference>
<reference key="2">
    <citation type="journal article" date="2017" name="Genome Announc.">
        <title>Updated reference genome sequence and annotation of Mycobacterium bovis AF2122/97.</title>
        <authorList>
            <person name="Malone K.M."/>
            <person name="Farrell D."/>
            <person name="Stuber T.P."/>
            <person name="Schubert O.T."/>
            <person name="Aebersold R."/>
            <person name="Robbe-Austerman S."/>
            <person name="Gordon S.V."/>
        </authorList>
    </citation>
    <scope>NUCLEOTIDE SEQUENCE [LARGE SCALE GENOMIC DNA]</scope>
    <scope>GENOME REANNOTATION</scope>
    <source>
        <strain>ATCC BAA-935 / AF2122/97</strain>
    </source>
</reference>
<feature type="chain" id="PRO_0000175571" description="Flavin-dependent thymidylate synthase">
    <location>
        <begin position="1"/>
        <end position="250"/>
    </location>
</feature>
<feature type="domain" description="ThyX" evidence="2">
    <location>
        <begin position="7"/>
        <end position="233"/>
    </location>
</feature>
<feature type="short sequence motif" description="ThyX motif" evidence="1">
    <location>
        <begin position="95"/>
        <end position="105"/>
    </location>
</feature>
<feature type="active site" description="Involved in ionization of N3 of dUMP, leading to its activation" evidence="1">
    <location>
        <position position="199"/>
    </location>
</feature>
<feature type="binding site" evidence="1">
    <location>
        <position position="71"/>
    </location>
    <ligand>
        <name>FAD</name>
        <dbReference type="ChEBI" id="CHEBI:57692"/>
        <note>ligand shared between neighboring subunits</note>
    </ligand>
</feature>
<feature type="binding site" evidence="1">
    <location>
        <begin position="92"/>
        <end position="95"/>
    </location>
    <ligand>
        <name>dUMP</name>
        <dbReference type="ChEBI" id="CHEBI:246422"/>
        <note>ligand shared between dimeric partners</note>
    </ligand>
</feature>
<feature type="binding site" evidence="1">
    <location>
        <begin position="95"/>
        <end position="97"/>
    </location>
    <ligand>
        <name>FAD</name>
        <dbReference type="ChEBI" id="CHEBI:57692"/>
        <note>ligand shared between neighboring subunits</note>
    </ligand>
</feature>
<feature type="binding site" description="in other chain" evidence="1">
    <location>
        <begin position="103"/>
        <end position="107"/>
    </location>
    <ligand>
        <name>dUMP</name>
        <dbReference type="ChEBI" id="CHEBI:246422"/>
        <note>ligand shared between dimeric partners</note>
    </ligand>
</feature>
<feature type="binding site" evidence="1">
    <location>
        <position position="103"/>
    </location>
    <ligand>
        <name>FAD</name>
        <dbReference type="ChEBI" id="CHEBI:57692"/>
        <note>ligand shared between neighboring subunits</note>
    </ligand>
</feature>
<feature type="binding site" description="in other chain" evidence="1">
    <location>
        <position position="172"/>
    </location>
    <ligand>
        <name>dUMP</name>
        <dbReference type="ChEBI" id="CHEBI:246422"/>
        <note>ligand shared between dimeric partners</note>
    </ligand>
</feature>
<feature type="binding site" evidence="1">
    <location>
        <begin position="188"/>
        <end position="190"/>
    </location>
    <ligand>
        <name>FAD</name>
        <dbReference type="ChEBI" id="CHEBI:57692"/>
        <note>ligand shared between neighboring subunits</note>
    </ligand>
</feature>
<feature type="binding site" evidence="1">
    <location>
        <position position="194"/>
    </location>
    <ligand>
        <name>FAD</name>
        <dbReference type="ChEBI" id="CHEBI:57692"/>
        <note>ligand shared between neighboring subunits</note>
    </ligand>
</feature>
<feature type="binding site" evidence="1">
    <location>
        <position position="199"/>
    </location>
    <ligand>
        <name>dUMP</name>
        <dbReference type="ChEBI" id="CHEBI:246422"/>
        <note>ligand shared between dimeric partners</note>
    </ligand>
</feature>